<comment type="function">
    <text evidence="1">Involved in transcription antitermination. Required for transcription of ribosomal RNA (rRNA) genes. Binds specifically to the boxA antiterminator sequence of the ribosomal RNA (rrn) operons.</text>
</comment>
<comment type="similarity">
    <text evidence="1">Belongs to the NusB family.</text>
</comment>
<sequence length="148" mass="17116">MSNRRSKARTAALQGLYQWQLMGQDVDKIDIEFIVQDIRGIDHAYFQELLRGVPQRQGELDECLGPFLDRPINEVDPVECAILRIGAFELLCRPEIPYRVVLNEAIELAKRFGAEHGHRYVNGILDKVAQKVRATEFRSRALRRRLQT</sequence>
<gene>
    <name evidence="1" type="primary">nusB</name>
    <name type="ordered locus">Noc_0803</name>
</gene>
<dbReference type="EMBL" id="CP000127">
    <property type="protein sequence ID" value="ABA57316.1"/>
    <property type="molecule type" value="Genomic_DNA"/>
</dbReference>
<dbReference type="RefSeq" id="WP_011330487.1">
    <property type="nucleotide sequence ID" value="NC_007484.1"/>
</dbReference>
<dbReference type="SMR" id="Q3JCY0"/>
<dbReference type="FunCoup" id="Q3JCY0">
    <property type="interactions" value="355"/>
</dbReference>
<dbReference type="STRING" id="323261.Noc_0803"/>
<dbReference type="KEGG" id="noc:Noc_0803"/>
<dbReference type="eggNOG" id="COG0781">
    <property type="taxonomic scope" value="Bacteria"/>
</dbReference>
<dbReference type="HOGENOM" id="CLU_087843_4_1_6"/>
<dbReference type="InParanoid" id="Q3JCY0"/>
<dbReference type="Proteomes" id="UP000006838">
    <property type="component" value="Chromosome"/>
</dbReference>
<dbReference type="GO" id="GO:0005829">
    <property type="term" value="C:cytosol"/>
    <property type="evidence" value="ECO:0007669"/>
    <property type="project" value="TreeGrafter"/>
</dbReference>
<dbReference type="GO" id="GO:0003723">
    <property type="term" value="F:RNA binding"/>
    <property type="evidence" value="ECO:0007669"/>
    <property type="project" value="UniProtKB-UniRule"/>
</dbReference>
<dbReference type="GO" id="GO:0006353">
    <property type="term" value="P:DNA-templated transcription termination"/>
    <property type="evidence" value="ECO:0007669"/>
    <property type="project" value="UniProtKB-UniRule"/>
</dbReference>
<dbReference type="GO" id="GO:0031564">
    <property type="term" value="P:transcription antitermination"/>
    <property type="evidence" value="ECO:0007669"/>
    <property type="project" value="UniProtKB-KW"/>
</dbReference>
<dbReference type="Gene3D" id="1.10.940.10">
    <property type="entry name" value="NusB-like"/>
    <property type="match status" value="1"/>
</dbReference>
<dbReference type="HAMAP" id="MF_00073">
    <property type="entry name" value="NusB"/>
    <property type="match status" value="1"/>
</dbReference>
<dbReference type="InterPro" id="IPR035926">
    <property type="entry name" value="NusB-like_sf"/>
</dbReference>
<dbReference type="InterPro" id="IPR011605">
    <property type="entry name" value="NusB_fam"/>
</dbReference>
<dbReference type="InterPro" id="IPR006027">
    <property type="entry name" value="NusB_RsmB_TIM44"/>
</dbReference>
<dbReference type="NCBIfam" id="TIGR01951">
    <property type="entry name" value="nusB"/>
    <property type="match status" value="1"/>
</dbReference>
<dbReference type="PANTHER" id="PTHR11078:SF3">
    <property type="entry name" value="ANTITERMINATION NUSB DOMAIN-CONTAINING PROTEIN"/>
    <property type="match status" value="1"/>
</dbReference>
<dbReference type="PANTHER" id="PTHR11078">
    <property type="entry name" value="N UTILIZATION SUBSTANCE PROTEIN B-RELATED"/>
    <property type="match status" value="1"/>
</dbReference>
<dbReference type="Pfam" id="PF01029">
    <property type="entry name" value="NusB"/>
    <property type="match status" value="1"/>
</dbReference>
<dbReference type="SUPFAM" id="SSF48013">
    <property type="entry name" value="NusB-like"/>
    <property type="match status" value="1"/>
</dbReference>
<protein>
    <recommendedName>
        <fullName evidence="1">Transcription antitermination protein NusB</fullName>
    </recommendedName>
    <alternativeName>
        <fullName evidence="1">Antitermination factor NusB</fullName>
    </alternativeName>
</protein>
<reference key="1">
    <citation type="journal article" date="2006" name="Appl. Environ. Microbiol.">
        <title>Complete genome sequence of the marine, chemolithoautotrophic, ammonia-oxidizing bacterium Nitrosococcus oceani ATCC 19707.</title>
        <authorList>
            <person name="Klotz M.G."/>
            <person name="Arp D.J."/>
            <person name="Chain P.S.G."/>
            <person name="El-Sheikh A.F."/>
            <person name="Hauser L.J."/>
            <person name="Hommes N.G."/>
            <person name="Larimer F.W."/>
            <person name="Malfatti S.A."/>
            <person name="Norton J.M."/>
            <person name="Poret-Peterson A.T."/>
            <person name="Vergez L.M."/>
            <person name="Ward B.B."/>
        </authorList>
    </citation>
    <scope>NUCLEOTIDE SEQUENCE [LARGE SCALE GENOMIC DNA]</scope>
    <source>
        <strain>ATCC 19707 / BCRC 17464 / JCM 30415 / NCIMB 11848 / C-107</strain>
    </source>
</reference>
<name>NUSB_NITOC</name>
<organism>
    <name type="scientific">Nitrosococcus oceani (strain ATCC 19707 / BCRC 17464 / JCM 30415 / NCIMB 11848 / C-107)</name>
    <dbReference type="NCBI Taxonomy" id="323261"/>
    <lineage>
        <taxon>Bacteria</taxon>
        <taxon>Pseudomonadati</taxon>
        <taxon>Pseudomonadota</taxon>
        <taxon>Gammaproteobacteria</taxon>
        <taxon>Chromatiales</taxon>
        <taxon>Chromatiaceae</taxon>
        <taxon>Nitrosococcus</taxon>
    </lineage>
</organism>
<evidence type="ECO:0000255" key="1">
    <source>
        <dbReference type="HAMAP-Rule" id="MF_00073"/>
    </source>
</evidence>
<keyword id="KW-1185">Reference proteome</keyword>
<keyword id="KW-0694">RNA-binding</keyword>
<keyword id="KW-0804">Transcription</keyword>
<keyword id="KW-0889">Transcription antitermination</keyword>
<keyword id="KW-0805">Transcription regulation</keyword>
<accession>Q3JCY0</accession>
<proteinExistence type="inferred from homology"/>
<feature type="chain" id="PRO_0000265552" description="Transcription antitermination protein NusB">
    <location>
        <begin position="1"/>
        <end position="148"/>
    </location>
</feature>